<sequence>MGGAISMRRSKPAGDLRQKLLRARGETYGRLLGEVEDGSSQSLGGLGKGLSSRSCEGQKYNQGQYMNTPWRNPAEEKEKLAYRKQNMDDIDEEDDDLVGVSVRPKVPLRAMTYKLAIDMSHFIKEKGGLEGIYYSARRHRILDMYLEKEEGIIPDWQDYTSGPGIRYPKTFGWLWKLVPVNVSDEAQEDERHYLMQPAQTSKWDDPWGEVLAWKFDPTPAYTYEAYVRYPEEFGSKSGLSEEEVRRRLTARGLLNMADKKETR</sequence>
<protein>
    <recommendedName>
        <fullName>Protein Nef</fullName>
    </recommendedName>
    <alternativeName>
        <fullName>3'ORF</fullName>
    </alternativeName>
    <alternativeName>
        <fullName>Negative factor</fullName>
        <shortName>F-protein</shortName>
    </alternativeName>
</protein>
<reference key="1">
    <citation type="journal article" date="1987" name="Cell">
        <title>The genome organization of STLV-3 is similar to that of the AIDS virus except for a truncated transmembrane protein.</title>
        <authorList>
            <person name="Hirsch V."/>
            <person name="Riedel N."/>
            <person name="Mullins J.I."/>
        </authorList>
    </citation>
    <scope>NUCLEOTIDE SEQUENCE [GENOMIC RNA]</scope>
</reference>
<proteinExistence type="inferred from homology"/>
<gene>
    <name type="primary">nef</name>
</gene>
<organism>
    <name type="scientific">Simian immunodeficiency virus (isolate K78)</name>
    <name type="common">SIV-mac</name>
    <name type="synonym">Simian immunodeficiency virus rhesus monkey</name>
    <dbReference type="NCBI Taxonomy" id="11736"/>
    <lineage>
        <taxon>Viruses</taxon>
        <taxon>Riboviria</taxon>
        <taxon>Pararnavirae</taxon>
        <taxon>Artverviricota</taxon>
        <taxon>Revtraviricetes</taxon>
        <taxon>Ortervirales</taxon>
        <taxon>Retroviridae</taxon>
        <taxon>Orthoretrovirinae</taxon>
        <taxon>Lentivirus</taxon>
        <taxon>Simian immunodeficiency virus</taxon>
    </lineage>
</organism>
<accession>P11262</accession>
<evidence type="ECO:0000250" key="1"/>
<evidence type="ECO:0000256" key="2">
    <source>
        <dbReference type="SAM" id="MobiDB-lite"/>
    </source>
</evidence>
<evidence type="ECO:0000305" key="3"/>
<organismHost>
    <name type="scientific">Cercopithecidae</name>
    <name type="common">Old World monkeys</name>
    <dbReference type="NCBI Taxonomy" id="9527"/>
</organismHost>
<dbReference type="PIR" id="F26737">
    <property type="entry name" value="ASLJRT"/>
</dbReference>
<dbReference type="SMR" id="P11262"/>
<dbReference type="GO" id="GO:0020002">
    <property type="term" value="C:host cell plasma membrane"/>
    <property type="evidence" value="ECO:0007669"/>
    <property type="project" value="UniProtKB-SubCell"/>
</dbReference>
<dbReference type="GO" id="GO:0016020">
    <property type="term" value="C:membrane"/>
    <property type="evidence" value="ECO:0007669"/>
    <property type="project" value="UniProtKB-KW"/>
</dbReference>
<dbReference type="GO" id="GO:0005525">
    <property type="term" value="F:GTP binding"/>
    <property type="evidence" value="ECO:0007669"/>
    <property type="project" value="InterPro"/>
</dbReference>
<dbReference type="Gene3D" id="3.30.62.10">
    <property type="entry name" value="Nef Regulatory Factor"/>
    <property type="match status" value="1"/>
</dbReference>
<dbReference type="InterPro" id="IPR027481">
    <property type="entry name" value="HIV-1_Nef_core_sf"/>
</dbReference>
<dbReference type="InterPro" id="IPR001558">
    <property type="entry name" value="HIV_Nef"/>
</dbReference>
<dbReference type="Pfam" id="PF00469">
    <property type="entry name" value="F-protein"/>
    <property type="match status" value="1"/>
</dbReference>
<dbReference type="SUPFAM" id="SSF55671">
    <property type="entry name" value="Regulatory factor Nef"/>
    <property type="match status" value="1"/>
</dbReference>
<name>NEF_SIVML</name>
<comment type="function">
    <text evidence="1">Seems to play a role in optimizing the host cell environment for viral replication without causing cell death by apoptosis. Enhances virus infectivity and pathogenicity. Probably involved in viral immune evasion mechanisms (By similarity).</text>
</comment>
<comment type="function">
    <text evidence="1">In infected CD4(+) T-lymphocytes, down-regulates cell surface expression of CD4, CD28, CD3, and MHC-I or MHC-II molecules.</text>
</comment>
<comment type="function">
    <text evidence="1">Interferes with TCR signaling from the cell membrane. Interacts with CD247/TCRZ (TCR zeta chain) and exert potent down-regulation of cell surface TCR/CD3 complexes (By similarity).</text>
</comment>
<comment type="subunit">
    <text evidence="1">Homodimer. Interacts with host CD247/TCRZ; this interaction induces down-regulation of cell surface TCR/CD3 complexes.</text>
</comment>
<comment type="subcellular location">
    <subcellularLocation>
        <location evidence="1">Host cell membrane</location>
        <topology evidence="1">Lipid-anchor</topology>
        <orientation evidence="1">Cytoplasmic side</orientation>
    </subcellularLocation>
    <text evidence="1">Associates with the inner plasma membrane through its N-terminal domain.</text>
</comment>
<comment type="domain">
    <text evidence="1">The N-terminal domain is composed of the N-myristoyl glycine and of a cluster of positively charged amino acids. It is required for inner plasma membrane targeting of Nef (By similarity).</text>
</comment>
<comment type="miscellaneous">
    <text>This is a macaque isolate.</text>
</comment>
<comment type="similarity">
    <text evidence="3">Belongs to the lentivirus primate group Nef protein family.</text>
</comment>
<keyword id="KW-1032">Host cell membrane</keyword>
<keyword id="KW-1043">Host membrane</keyword>
<keyword id="KW-0945">Host-virus interaction</keyword>
<keyword id="KW-0449">Lipoprotein</keyword>
<keyword id="KW-0472">Membrane</keyword>
<keyword id="KW-0519">Myristate</keyword>
<keyword id="KW-0899">Viral immunoevasion</keyword>
<keyword id="KW-0843">Virulence</keyword>
<feature type="initiator methionine" description="Removed; by host" evidence="1">
    <location>
        <position position="1"/>
    </location>
</feature>
<feature type="chain" id="PRO_0000085247" description="Protein Nef">
    <location>
        <begin position="2"/>
        <end position="263"/>
    </location>
</feature>
<feature type="region of interest" description="Disordered" evidence="2">
    <location>
        <begin position="31"/>
        <end position="54"/>
    </location>
</feature>
<feature type="region of interest" description="Acidic">
    <location>
        <begin position="88"/>
        <end position="96"/>
    </location>
</feature>
<feature type="region of interest" description="Mediates dimerization" evidence="1">
    <location>
        <begin position="140"/>
        <end position="156"/>
    </location>
</feature>
<feature type="lipid moiety-binding region" description="N-myristoyl glycine; by host" evidence="1">
    <location>
        <position position="2"/>
    </location>
</feature>